<reference key="1">
    <citation type="submission" date="2004-11" db="EMBL/GenBank/DDBJ databases">
        <authorList>
            <consortium name="The German cDNA consortium"/>
        </authorList>
    </citation>
    <scope>NUCLEOTIDE SEQUENCE [LARGE SCALE MRNA]</scope>
    <source>
        <tissue>Brain cortex</tissue>
    </source>
</reference>
<sequence length="763" mass="84832">MERGGGGGFGTGSRPEGTARGTCLPGKIAEPGAVRTSQPNYRPQGMEGFLKSGERQRLAKERREEREKCLAAREQQILEKQKRAKLQYEKQMEERWRKLEEQRQREDQKRAAVEEKRKQKLREEEERLEAMMRRSLERTQQLELKKKYSWGAPLAIGPGGHDGESENTPPPPLGLAASTLPPDAGTTAAAAESTNACDKLSTSTMSLPKPTEPPMSKRLSSSTVAISYSPDRAPLGPLNPSYKSSPTRNIEKKKATSTSTSGAGDVGKEALAGGEASLVEKVKRGQRTATSLPVVNFGSPLRRCEFSGGIPKRPSSPVISKTATKAYPQSPKTTKPPYPGSPVKYRLPALSGQDMPKRKAEKEKSNKEREGTLAQQAAGPQGEDALEKHVVDKHASEKHAAATGGKAENSAALGKPTAGTTDAGEAAKILAEKRRQARLQKEQEEQERLEKEEQDRLEREELKRKAEEERLRLEEEARKQEEERKRQEEEKKKQEEEEKREAGEEAKRKAEEELLLKEKQEQEKPEKEKQEKAMIEKQKEAAEAKAREVAEQMRLEREQIMLQIEQERLERKKRIDEIMKRTRKSDVSPQVKKEDPKMGVQPAVCVEKKTKLVVPNKMEINGLNTCQEINGVDHAAPETYPQDIFSNGLKPAGGLIHLDALDGKSNSLDDSTEEVQSMDVSPVSKEELISIPEFSPVSEMIPGVPLDQNGTGNARALQDLLDFTGPPTFPKRSSENLSLDDCNKNLIEGFNSPGQETPLNTFC</sequence>
<name>MA7D2_PONAB</name>
<organism>
    <name type="scientific">Pongo abelii</name>
    <name type="common">Sumatran orangutan</name>
    <name type="synonym">Pongo pygmaeus abelii</name>
    <dbReference type="NCBI Taxonomy" id="9601"/>
    <lineage>
        <taxon>Eukaryota</taxon>
        <taxon>Metazoa</taxon>
        <taxon>Chordata</taxon>
        <taxon>Craniata</taxon>
        <taxon>Vertebrata</taxon>
        <taxon>Euteleostomi</taxon>
        <taxon>Mammalia</taxon>
        <taxon>Eutheria</taxon>
        <taxon>Euarchontoglires</taxon>
        <taxon>Primates</taxon>
        <taxon>Haplorrhini</taxon>
        <taxon>Catarrhini</taxon>
        <taxon>Hominidae</taxon>
        <taxon>Pongo</taxon>
    </lineage>
</organism>
<feature type="chain" id="PRO_0000306811" description="MAP7 domain-containing protein 2">
    <location>
        <begin position="1"/>
        <end position="763"/>
    </location>
</feature>
<feature type="region of interest" description="Disordered" evidence="5">
    <location>
        <begin position="1"/>
        <end position="63"/>
    </location>
</feature>
<feature type="region of interest" description="Disordered" evidence="5">
    <location>
        <begin position="96"/>
        <end position="124"/>
    </location>
</feature>
<feature type="region of interest" description="Disordered" evidence="5">
    <location>
        <begin position="149"/>
        <end position="268"/>
    </location>
</feature>
<feature type="region of interest" description="Disordered" evidence="5">
    <location>
        <begin position="300"/>
        <end position="540"/>
    </location>
</feature>
<feature type="coiled-coil region" evidence="4">
    <location>
        <begin position="54"/>
        <end position="147"/>
    </location>
</feature>
<feature type="compositionally biased region" description="Gly residues" evidence="5">
    <location>
        <begin position="1"/>
        <end position="11"/>
    </location>
</feature>
<feature type="compositionally biased region" description="Basic and acidic residues" evidence="5">
    <location>
        <begin position="52"/>
        <end position="63"/>
    </location>
</feature>
<feature type="compositionally biased region" description="Polar residues" evidence="5">
    <location>
        <begin position="192"/>
        <end position="206"/>
    </location>
</feature>
<feature type="compositionally biased region" description="Basic and acidic residues" evidence="5">
    <location>
        <begin position="355"/>
        <end position="371"/>
    </location>
</feature>
<feature type="compositionally biased region" description="Basic and acidic residues" evidence="5">
    <location>
        <begin position="385"/>
        <end position="400"/>
    </location>
</feature>
<feature type="compositionally biased region" description="Basic and acidic residues" evidence="5">
    <location>
        <begin position="430"/>
        <end position="540"/>
    </location>
</feature>
<feature type="sequence conflict" description="In Ref. 1; CAH93335." evidence="6" ref="1">
    <original>G</original>
    <variation>D</variation>
    <location>
        <position position="53"/>
    </location>
</feature>
<feature type="sequence conflict" description="In Ref. 1; CAH93335." evidence="6" ref="1">
    <original>P</original>
    <variation>S</variation>
    <location>
        <position position="705"/>
    </location>
</feature>
<accession>Q5R7F9</accession>
<accession>Q5R4I1</accession>
<proteinExistence type="evidence at transcript level"/>
<evidence type="ECO:0000250" key="1">
    <source>
        <dbReference type="UniProtKB" id="A2AG50"/>
    </source>
</evidence>
<evidence type="ECO:0000250" key="2">
    <source>
        <dbReference type="UniProtKB" id="D4A4L4"/>
    </source>
</evidence>
<evidence type="ECO:0000250" key="3">
    <source>
        <dbReference type="UniProtKB" id="Q96T17"/>
    </source>
</evidence>
<evidence type="ECO:0000255" key="4"/>
<evidence type="ECO:0000256" key="5">
    <source>
        <dbReference type="SAM" id="MobiDB-lite"/>
    </source>
</evidence>
<evidence type="ECO:0000305" key="6"/>
<comment type="function">
    <text evidence="1 2">Microtubule-stabilizing protein involved in the control of cell motility and neurite outgrowth (By similarity). Acts as a critical cofactor for kinesin transport; in the proximal axon regulates kinesin-1 family members, KIF5A, KIF5B and KIF5C recruitment to microtubules and contributes to kinesin-1-mediated transport in the axons (By similarity).</text>
</comment>
<comment type="subunit">
    <text evidence="2">Interacts (via N-terminus) with microtubules; facilitates microtubule stabilization. Interacts with kinesin-1 family members, KIF5A, KIF5B and KIF5C.</text>
</comment>
<comment type="subcellular location">
    <subcellularLocation>
        <location evidence="1">Cytoplasm</location>
        <location evidence="1">Cytoskeleton</location>
        <location evidence="1">Microtubule organizing center</location>
        <location evidence="1">Centrosome</location>
    </subcellularLocation>
    <subcellularLocation>
        <location evidence="1">Midbody</location>
    </subcellularLocation>
    <subcellularLocation>
        <location evidence="1">Cytoplasm</location>
        <location evidence="1">Cytoskeleton</location>
    </subcellularLocation>
    <subcellularLocation>
        <location evidence="1">Cell projection</location>
        <location evidence="1">Neuron projection</location>
    </subcellularLocation>
    <subcellularLocation>
        <location evidence="3">Cell projection</location>
        <location evidence="3">Axon</location>
    </subcellularLocation>
    <text evidence="3">Strongly localizes to the centrosome and partially on microtubule. During cytokinesis, accumulates at the midbody. Accumulates to the proximal part of the axon.</text>
</comment>
<comment type="similarity">
    <text evidence="6">Belongs to the MAP7 family.</text>
</comment>
<comment type="sequence caution" evidence="6">
    <conflict type="erroneous initiation">
        <sequence resource="EMBL-CDS" id="CAH93335"/>
    </conflict>
</comment>
<dbReference type="EMBL" id="CR860158">
    <property type="protein sequence ID" value="CAH92301.1"/>
    <property type="molecule type" value="mRNA"/>
</dbReference>
<dbReference type="EMBL" id="CR861267">
    <property type="protein sequence ID" value="CAH93335.1"/>
    <property type="status" value="ALT_INIT"/>
    <property type="molecule type" value="mRNA"/>
</dbReference>
<dbReference type="RefSeq" id="NP_001126346.1">
    <property type="nucleotide sequence ID" value="NM_001132874.1"/>
</dbReference>
<dbReference type="RefSeq" id="NP_001128905.1">
    <property type="nucleotide sequence ID" value="NM_001135433.1"/>
</dbReference>
<dbReference type="SMR" id="Q5R7F9"/>
<dbReference type="STRING" id="9601.ENSPPYP00000022573"/>
<dbReference type="GeneID" id="100189848"/>
<dbReference type="KEGG" id="pon:100189848"/>
<dbReference type="CTD" id="256714"/>
<dbReference type="eggNOG" id="ENOG502QTSG">
    <property type="taxonomic scope" value="Eukaryota"/>
</dbReference>
<dbReference type="InParanoid" id="Q5R7F9"/>
<dbReference type="OrthoDB" id="9950098at2759"/>
<dbReference type="Proteomes" id="UP000001595">
    <property type="component" value="Unplaced"/>
</dbReference>
<dbReference type="GO" id="GO:0030424">
    <property type="term" value="C:axon"/>
    <property type="evidence" value="ECO:0007669"/>
    <property type="project" value="UniProtKB-SubCell"/>
</dbReference>
<dbReference type="GO" id="GO:0005813">
    <property type="term" value="C:centrosome"/>
    <property type="evidence" value="ECO:0000250"/>
    <property type="project" value="UniProtKB"/>
</dbReference>
<dbReference type="GO" id="GO:0005874">
    <property type="term" value="C:microtubule"/>
    <property type="evidence" value="ECO:0000250"/>
    <property type="project" value="UniProtKB"/>
</dbReference>
<dbReference type="GO" id="GO:0030496">
    <property type="term" value="C:midbody"/>
    <property type="evidence" value="ECO:0000250"/>
    <property type="project" value="UniProtKB"/>
</dbReference>
<dbReference type="GO" id="GO:0043005">
    <property type="term" value="C:neuron projection"/>
    <property type="evidence" value="ECO:0000250"/>
    <property type="project" value="UniProtKB"/>
</dbReference>
<dbReference type="GO" id="GO:0019894">
    <property type="term" value="F:kinesin binding"/>
    <property type="evidence" value="ECO:0000250"/>
    <property type="project" value="UniProtKB"/>
</dbReference>
<dbReference type="GO" id="GO:0008017">
    <property type="term" value="F:microtubule binding"/>
    <property type="evidence" value="ECO:0000250"/>
    <property type="project" value="UniProtKB"/>
</dbReference>
<dbReference type="GO" id="GO:0061564">
    <property type="term" value="P:axon development"/>
    <property type="evidence" value="ECO:0000250"/>
    <property type="project" value="UniProtKB"/>
</dbReference>
<dbReference type="GO" id="GO:0000226">
    <property type="term" value="P:microtubule cytoskeleton organization"/>
    <property type="evidence" value="ECO:0000250"/>
    <property type="project" value="UniProtKB"/>
</dbReference>
<dbReference type="InterPro" id="IPR051483">
    <property type="entry name" value="MAP7_domain-containing"/>
</dbReference>
<dbReference type="InterPro" id="IPR008604">
    <property type="entry name" value="MAP7_fam"/>
</dbReference>
<dbReference type="PANTHER" id="PTHR15073:SF3">
    <property type="entry name" value="MAP7 DOMAIN-CONTAINING PROTEIN 2"/>
    <property type="match status" value="1"/>
</dbReference>
<dbReference type="PANTHER" id="PTHR15073">
    <property type="entry name" value="MICROTUBULE-ASSOCIATED PROTEIN"/>
    <property type="match status" value="1"/>
</dbReference>
<dbReference type="Pfam" id="PF05672">
    <property type="entry name" value="MAP7"/>
    <property type="match status" value="1"/>
</dbReference>
<gene>
    <name type="primary">MAP7D2</name>
</gene>
<protein>
    <recommendedName>
        <fullName>MAP7 domain-containing protein 2</fullName>
    </recommendedName>
</protein>
<keyword id="KW-0966">Cell projection</keyword>
<keyword id="KW-0175">Coiled coil</keyword>
<keyword id="KW-0963">Cytoplasm</keyword>
<keyword id="KW-0206">Cytoskeleton</keyword>
<keyword id="KW-1185">Reference proteome</keyword>